<feature type="signal peptide" evidence="4">
    <location>
        <begin position="1"/>
        <end position="20"/>
    </location>
</feature>
<feature type="chain" id="PRO_0000012932" description="Metabotropic glutamate receptor 5">
    <location>
        <begin position="21"/>
        <end position="1212"/>
    </location>
</feature>
<feature type="topological domain" description="Extracellular" evidence="7">
    <location>
        <begin position="22"/>
        <end position="580"/>
    </location>
</feature>
<feature type="transmembrane region" description="Helical; Name=1">
    <location>
        <begin position="581"/>
        <end position="603"/>
    </location>
</feature>
<feature type="topological domain" description="Cytoplasmic" evidence="7">
    <location>
        <begin position="604"/>
        <end position="613"/>
    </location>
</feature>
<feature type="transmembrane region" description="Helical; Name=2">
    <location>
        <begin position="614"/>
        <end position="636"/>
    </location>
</feature>
<feature type="topological domain" description="Extracellular" evidence="7">
    <location>
        <begin position="637"/>
        <end position="644"/>
    </location>
</feature>
<feature type="transmembrane region" description="Helical; Name=3">
    <location>
        <begin position="645"/>
        <end position="667"/>
    </location>
</feature>
<feature type="topological domain" description="Cytoplasmic" evidence="7">
    <location>
        <begin position="668"/>
        <end position="693"/>
    </location>
</feature>
<feature type="transmembrane region" description="Helical; Name=4">
    <location>
        <begin position="694"/>
        <end position="714"/>
    </location>
</feature>
<feature type="topological domain" description="Extracellular" evidence="7">
    <location>
        <begin position="715"/>
        <end position="737"/>
    </location>
</feature>
<feature type="transmembrane region" description="Helical; Name=5">
    <location>
        <begin position="738"/>
        <end position="759"/>
    </location>
</feature>
<feature type="topological domain" description="Cytoplasmic" evidence="7">
    <location>
        <begin position="760"/>
        <end position="772"/>
    </location>
</feature>
<feature type="transmembrane region" description="Helical; Name=6">
    <location>
        <begin position="773"/>
        <end position="795"/>
    </location>
</feature>
<feature type="topological domain" description="Extracellular" evidence="7">
    <location>
        <begin position="796"/>
        <end position="798"/>
    </location>
</feature>
<feature type="transmembrane region" description="Helical; Name=7">
    <location>
        <begin position="799"/>
        <end position="820"/>
    </location>
</feature>
<feature type="topological domain" description="Cytoplasmic" evidence="7">
    <location>
        <begin position="821"/>
        <end position="1212"/>
    </location>
</feature>
<feature type="region of interest" description="Disordered" evidence="5">
    <location>
        <begin position="937"/>
        <end position="971"/>
    </location>
</feature>
<feature type="region of interest" description="Disordered" evidence="5">
    <location>
        <begin position="1010"/>
        <end position="1056"/>
    </location>
</feature>
<feature type="region of interest" description="Disordered" evidence="5">
    <location>
        <begin position="1132"/>
        <end position="1191"/>
    </location>
</feature>
<feature type="compositionally biased region" description="Gly residues" evidence="5">
    <location>
        <begin position="961"/>
        <end position="971"/>
    </location>
</feature>
<feature type="compositionally biased region" description="Low complexity" evidence="5">
    <location>
        <begin position="1132"/>
        <end position="1153"/>
    </location>
</feature>
<feature type="compositionally biased region" description="Polar residues" evidence="5">
    <location>
        <begin position="1174"/>
        <end position="1185"/>
    </location>
</feature>
<feature type="binding site" evidence="10">
    <location>
        <position position="64"/>
    </location>
    <ligand>
        <name>L-glutamate</name>
        <dbReference type="ChEBI" id="CHEBI:29985"/>
    </ligand>
</feature>
<feature type="binding site" evidence="10">
    <location>
        <position position="152"/>
    </location>
    <ligand>
        <name>L-glutamate</name>
        <dbReference type="ChEBI" id="CHEBI:29985"/>
    </ligand>
</feature>
<feature type="binding site">
    <location>
        <begin position="173"/>
        <end position="175"/>
    </location>
    <ligand>
        <name>L-glutamate</name>
        <dbReference type="ChEBI" id="CHEBI:29985"/>
    </ligand>
</feature>
<feature type="binding site" evidence="10">
    <location>
        <position position="223"/>
    </location>
    <ligand>
        <name>L-glutamate</name>
        <dbReference type="ChEBI" id="CHEBI:29985"/>
    </ligand>
</feature>
<feature type="binding site" evidence="10">
    <location>
        <position position="305"/>
    </location>
    <ligand>
        <name>L-glutamate</name>
        <dbReference type="ChEBI" id="CHEBI:29985"/>
    </ligand>
</feature>
<feature type="binding site" evidence="10">
    <location>
        <position position="396"/>
    </location>
    <ligand>
        <name>L-glutamate</name>
        <dbReference type="ChEBI" id="CHEBI:29985"/>
    </ligand>
</feature>
<feature type="modified residue" description="Phosphoserine" evidence="2">
    <location>
        <position position="861"/>
    </location>
</feature>
<feature type="modified residue" description="Omega-N-methylarginine" evidence="3">
    <location>
        <position position="869"/>
    </location>
</feature>
<feature type="modified residue" description="Omega-N-methylarginine" evidence="3">
    <location>
        <position position="925"/>
    </location>
</feature>
<feature type="modified residue" description="Phosphoserine" evidence="3">
    <location>
        <position position="1018"/>
    </location>
</feature>
<feature type="modified residue" description="Phosphoserine" evidence="3">
    <location>
        <position position="1020"/>
    </location>
</feature>
<feature type="glycosylation site" description="N-linked (GlcNAc...) asparagine" evidence="4">
    <location>
        <position position="88"/>
    </location>
</feature>
<feature type="glycosylation site" description="N-linked (GlcNAc...) asparagine" evidence="4">
    <location>
        <position position="210"/>
    </location>
</feature>
<feature type="glycosylation site" description="N-linked (GlcNAc...) asparagine" evidence="4">
    <location>
        <position position="378"/>
    </location>
</feature>
<feature type="glycosylation site" description="N-linked (GlcNAc...) asparagine" evidence="4">
    <location>
        <position position="382"/>
    </location>
</feature>
<feature type="glycosylation site" description="N-linked (GlcNAc...) asparagine" evidence="10">
    <location>
        <position position="445"/>
    </location>
</feature>
<feature type="glycosylation site" description="N-linked (GlcNAc...) asparagine" evidence="4">
    <location>
        <position position="734"/>
    </location>
</feature>
<feature type="disulfide bond">
    <location>
        <begin position="57"/>
        <end position="99"/>
    </location>
</feature>
<feature type="disulfide bond" evidence="1">
    <location>
        <begin position="241"/>
        <end position="530"/>
    </location>
</feature>
<feature type="disulfide bond">
    <location>
        <begin position="276"/>
        <end position="278"/>
    </location>
</feature>
<feature type="disulfide bond">
    <location>
        <begin position="365"/>
        <end position="381"/>
    </location>
</feature>
<feature type="disulfide bond">
    <location>
        <begin position="419"/>
        <end position="426"/>
    </location>
</feature>
<feature type="disulfide bond" evidence="1">
    <location>
        <begin position="511"/>
        <end position="531"/>
    </location>
</feature>
<feature type="disulfide bond" evidence="1">
    <location>
        <begin position="515"/>
        <end position="534"/>
    </location>
</feature>
<feature type="disulfide bond" evidence="1">
    <location>
        <begin position="537"/>
        <end position="549"/>
    </location>
</feature>
<feature type="disulfide bond" evidence="1">
    <location>
        <begin position="552"/>
        <end position="565"/>
    </location>
</feature>
<feature type="disulfide bond">
    <location>
        <begin position="644"/>
        <end position="733"/>
    </location>
</feature>
<feature type="splice variant" id="VSP_002030" description="In isoform 1." evidence="11">
    <location>
        <begin position="877"/>
        <end position="908"/>
    </location>
</feature>
<feature type="splice variant" id="VSP_047710" description="In isoform 3." evidence="12">
    <location>
        <begin position="896"/>
        <end position="1165"/>
    </location>
</feature>
<feature type="mutagenesis site" description="Increased constitutive signaling activity." evidence="7">
    <original>S</original>
    <variation>A</variation>
    <variation>K</variation>
    <location>
        <position position="613"/>
    </location>
</feature>
<feature type="mutagenesis site" description="Decreased constitutive signaling activity." evidence="7">
    <original>S</original>
    <variation>D</variation>
    <location>
        <position position="614"/>
    </location>
</feature>
<feature type="mutagenesis site" description="Increased constitutive signaling activity." evidence="7">
    <original>K</original>
    <variation>A</variation>
    <location>
        <position position="665"/>
    </location>
</feature>
<feature type="mutagenesis site" description="Increased constitutive signaling activity." evidence="7">
    <original>E</original>
    <variation>A</variation>
    <location>
        <position position="770"/>
    </location>
</feature>
<feature type="strand" evidence="15">
    <location>
        <begin position="29"/>
        <end position="31"/>
    </location>
</feature>
<feature type="strand" evidence="15">
    <location>
        <begin position="34"/>
        <end position="41"/>
    </location>
</feature>
<feature type="strand" evidence="15">
    <location>
        <begin position="49"/>
        <end position="51"/>
    </location>
</feature>
<feature type="turn" evidence="15">
    <location>
        <begin position="52"/>
        <end position="55"/>
    </location>
</feature>
<feature type="turn" evidence="15">
    <location>
        <begin position="62"/>
        <end position="65"/>
    </location>
</feature>
<feature type="helix" evidence="15">
    <location>
        <begin position="66"/>
        <end position="81"/>
    </location>
</feature>
<feature type="strand" evidence="19">
    <location>
        <begin position="83"/>
        <end position="86"/>
    </location>
</feature>
<feature type="strand" evidence="15">
    <location>
        <begin position="91"/>
        <end position="97"/>
    </location>
</feature>
<feature type="helix" evidence="15">
    <location>
        <begin position="102"/>
        <end position="112"/>
    </location>
</feature>
<feature type="turn" evidence="18">
    <location>
        <begin position="113"/>
        <end position="116"/>
    </location>
</feature>
<feature type="helix" evidence="17">
    <location>
        <begin position="118"/>
        <end position="121"/>
    </location>
</feature>
<feature type="strand" evidence="15">
    <location>
        <begin position="143"/>
        <end position="147"/>
    </location>
</feature>
<feature type="helix" evidence="15">
    <location>
        <begin position="152"/>
        <end position="162"/>
    </location>
</feature>
<feature type="helix" evidence="15">
    <location>
        <begin position="163"/>
        <end position="165"/>
    </location>
</feature>
<feature type="strand" evidence="15">
    <location>
        <begin position="169"/>
        <end position="173"/>
    </location>
</feature>
<feature type="helix" evidence="15">
    <location>
        <begin position="177"/>
        <end position="180"/>
    </location>
</feature>
<feature type="turn" evidence="15">
    <location>
        <begin position="182"/>
        <end position="184"/>
    </location>
</feature>
<feature type="strand" evidence="15">
    <location>
        <begin position="188"/>
        <end position="192"/>
    </location>
</feature>
<feature type="helix" evidence="15">
    <location>
        <begin position="195"/>
        <end position="208"/>
    </location>
</feature>
<feature type="strand" evidence="15">
    <location>
        <begin position="213"/>
        <end position="219"/>
    </location>
</feature>
<feature type="helix" evidence="15">
    <location>
        <begin position="222"/>
        <end position="235"/>
    </location>
</feature>
<feature type="turn" evidence="15">
    <location>
        <begin position="236"/>
        <end position="239"/>
    </location>
</feature>
<feature type="strand" evidence="15">
    <location>
        <begin position="241"/>
        <end position="248"/>
    </location>
</feature>
<feature type="helix" evidence="15">
    <location>
        <begin position="254"/>
        <end position="267"/>
    </location>
</feature>
<feature type="turn" evidence="15">
    <location>
        <begin position="268"/>
        <end position="270"/>
    </location>
</feature>
<feature type="strand" evidence="15">
    <location>
        <begin position="273"/>
        <end position="277"/>
    </location>
</feature>
<feature type="helix" evidence="15">
    <location>
        <begin position="280"/>
        <end position="293"/>
    </location>
</feature>
<feature type="strand" evidence="20">
    <location>
        <begin position="296"/>
        <end position="298"/>
    </location>
</feature>
<feature type="strand" evidence="15">
    <location>
        <begin position="300"/>
        <end position="303"/>
    </location>
</feature>
<feature type="turn" evidence="15">
    <location>
        <begin position="307"/>
        <end position="309"/>
    </location>
</feature>
<feature type="helix" evidence="15">
    <location>
        <begin position="311"/>
        <end position="314"/>
    </location>
</feature>
<feature type="helix" evidence="15">
    <location>
        <begin position="318"/>
        <end position="321"/>
    </location>
</feature>
<feature type="strand" evidence="15">
    <location>
        <begin position="325"/>
        <end position="329"/>
    </location>
</feature>
<feature type="helix" evidence="15">
    <location>
        <begin position="335"/>
        <end position="342"/>
    </location>
</feature>
<feature type="turn" evidence="15">
    <location>
        <begin position="346"/>
        <end position="348"/>
    </location>
</feature>
<feature type="helix" evidence="15">
    <location>
        <begin position="355"/>
        <end position="363"/>
    </location>
</feature>
<feature type="strand" evidence="17">
    <location>
        <begin position="368"/>
        <end position="370"/>
    </location>
</feature>
<feature type="strand" evidence="18">
    <location>
        <begin position="376"/>
        <end position="380"/>
    </location>
</feature>
<feature type="turn" evidence="15">
    <location>
        <begin position="387"/>
        <end position="390"/>
    </location>
</feature>
<feature type="helix" evidence="15">
    <location>
        <begin position="397"/>
        <end position="418"/>
    </location>
</feature>
<feature type="strand" evidence="19">
    <location>
        <begin position="419"/>
        <end position="421"/>
    </location>
</feature>
<feature type="helix" evidence="15">
    <location>
        <begin position="427"/>
        <end position="429"/>
    </location>
</feature>
<feature type="helix" evidence="15">
    <location>
        <begin position="434"/>
        <end position="441"/>
    </location>
</feature>
<feature type="strand" evidence="15">
    <location>
        <begin position="445"/>
        <end position="447"/>
    </location>
</feature>
<feature type="strand" evidence="15">
    <location>
        <begin position="449"/>
        <end position="451"/>
    </location>
</feature>
<feature type="strand" evidence="15">
    <location>
        <begin position="453"/>
        <end position="455"/>
    </location>
</feature>
<feature type="strand" evidence="15">
    <location>
        <begin position="466"/>
        <end position="475"/>
    </location>
</feature>
<feature type="strand" evidence="15">
    <location>
        <begin position="479"/>
        <end position="488"/>
    </location>
</feature>
<feature type="strand" evidence="15">
    <location>
        <begin position="491"/>
        <end position="494"/>
    </location>
</feature>
<feature type="turn" evidence="19">
    <location>
        <begin position="496"/>
        <end position="498"/>
    </location>
</feature>
<feature type="strand" evidence="20">
    <location>
        <begin position="499"/>
        <end position="503"/>
    </location>
</feature>
<feature type="strand" evidence="19">
    <location>
        <begin position="518"/>
        <end position="523"/>
    </location>
</feature>
<feature type="strand" evidence="17">
    <location>
        <begin position="529"/>
        <end position="531"/>
    </location>
</feature>
<feature type="strand" evidence="19">
    <location>
        <begin position="533"/>
        <end position="536"/>
    </location>
</feature>
<feature type="strand" evidence="19">
    <location>
        <begin position="541"/>
        <end position="545"/>
    </location>
</feature>
<feature type="strand" evidence="19">
    <location>
        <begin position="548"/>
        <end position="551"/>
    </location>
</feature>
<feature type="strand" evidence="19">
    <location>
        <begin position="556"/>
        <end position="558"/>
    </location>
</feature>
<feature type="helix" evidence="20">
    <location>
        <begin position="560"/>
        <end position="562"/>
    </location>
</feature>
<feature type="strand" evidence="19">
    <location>
        <begin position="565"/>
        <end position="567"/>
    </location>
</feature>
<feature type="helix" evidence="16">
    <location>
        <begin position="569"/>
        <end position="575"/>
    </location>
</feature>
<feature type="helix" evidence="16">
    <location>
        <begin position="579"/>
        <end position="603"/>
    </location>
</feature>
<feature type="turn" evidence="16">
    <location>
        <begin position="604"/>
        <end position="606"/>
    </location>
</feature>
<feature type="helix" evidence="16">
    <location>
        <begin position="608"/>
        <end position="611"/>
    </location>
</feature>
<feature type="helix" evidence="16">
    <location>
        <begin position="615"/>
        <end position="630"/>
    </location>
</feature>
<feature type="helix" evidence="16">
    <location>
        <begin position="632"/>
        <end position="635"/>
    </location>
</feature>
<feature type="strand" evidence="20">
    <location>
        <begin position="636"/>
        <end position="638"/>
    </location>
</feature>
<feature type="helix" evidence="16">
    <location>
        <begin position="641"/>
        <end position="678"/>
    </location>
</feature>
<feature type="helix" evidence="16">
    <location>
        <begin position="690"/>
        <end position="714"/>
    </location>
</feature>
<feature type="strand" evidence="19">
    <location>
        <begin position="719"/>
        <end position="722"/>
    </location>
</feature>
<feature type="strand" evidence="19">
    <location>
        <begin position="724"/>
        <end position="727"/>
    </location>
</feature>
<feature type="strand" evidence="19">
    <location>
        <begin position="730"/>
        <end position="733"/>
    </location>
</feature>
<feature type="helix" evidence="16">
    <location>
        <begin position="738"/>
        <end position="760"/>
    </location>
</feature>
<feature type="turn" evidence="16">
    <location>
        <begin position="761"/>
        <end position="763"/>
    </location>
</feature>
<feature type="helix" evidence="16">
    <location>
        <begin position="766"/>
        <end position="793"/>
    </location>
</feature>
<feature type="strand" evidence="18">
    <location>
        <begin position="794"/>
        <end position="797"/>
    </location>
</feature>
<feature type="helix" evidence="16">
    <location>
        <begin position="798"/>
        <end position="817"/>
    </location>
</feature>
<feature type="helix" evidence="16">
    <location>
        <begin position="819"/>
        <end position="827"/>
    </location>
</feature>
<feature type="turn" evidence="16">
    <location>
        <begin position="829"/>
        <end position="831"/>
    </location>
</feature>
<gene>
    <name type="primary">GRM5</name>
    <name type="synonym">GPRC1E</name>
    <name type="synonym">MGLUR5</name>
</gene>
<organism>
    <name type="scientific">Homo sapiens</name>
    <name type="common">Human</name>
    <dbReference type="NCBI Taxonomy" id="9606"/>
    <lineage>
        <taxon>Eukaryota</taxon>
        <taxon>Metazoa</taxon>
        <taxon>Chordata</taxon>
        <taxon>Craniata</taxon>
        <taxon>Vertebrata</taxon>
        <taxon>Euteleostomi</taxon>
        <taxon>Mammalia</taxon>
        <taxon>Eutheria</taxon>
        <taxon>Euarchontoglires</taxon>
        <taxon>Primates</taxon>
        <taxon>Haplorrhini</taxon>
        <taxon>Catarrhini</taxon>
        <taxon>Hominidae</taxon>
        <taxon>Homo</taxon>
    </lineage>
</organism>
<accession>P41594</accession>
<accession>Q6J164</accession>
<proteinExistence type="evidence at protein level"/>
<name>GRM5_HUMAN</name>
<keyword id="KW-0002">3D-structure</keyword>
<keyword id="KW-0025">Alternative splicing</keyword>
<keyword id="KW-1003">Cell membrane</keyword>
<keyword id="KW-1015">Disulfide bond</keyword>
<keyword id="KW-0297">G-protein coupled receptor</keyword>
<keyword id="KW-0325">Glycoprotein</keyword>
<keyword id="KW-0472">Membrane</keyword>
<keyword id="KW-0488">Methylation</keyword>
<keyword id="KW-0597">Phosphoprotein</keyword>
<keyword id="KW-1267">Proteomics identification</keyword>
<keyword id="KW-0675">Receptor</keyword>
<keyword id="KW-1185">Reference proteome</keyword>
<keyword id="KW-0732">Signal</keyword>
<keyword id="KW-0807">Transducer</keyword>
<keyword id="KW-0812">Transmembrane</keyword>
<keyword id="KW-1133">Transmembrane helix</keyword>
<protein>
    <recommendedName>
        <fullName>Metabotropic glutamate receptor 5</fullName>
        <shortName>mGluR5</shortName>
    </recommendedName>
</protein>
<evidence type="ECO:0000250" key="1"/>
<evidence type="ECO:0000250" key="2">
    <source>
        <dbReference type="UniProtKB" id="P31424"/>
    </source>
</evidence>
<evidence type="ECO:0000250" key="3">
    <source>
        <dbReference type="UniProtKB" id="Q3UVX5"/>
    </source>
</evidence>
<evidence type="ECO:0000255" key="4"/>
<evidence type="ECO:0000256" key="5">
    <source>
        <dbReference type="SAM" id="MobiDB-lite"/>
    </source>
</evidence>
<evidence type="ECO:0000269" key="6">
    <source>
    </source>
</evidence>
<evidence type="ECO:0000269" key="7">
    <source>
    </source>
</evidence>
<evidence type="ECO:0000269" key="8">
    <source>
    </source>
</evidence>
<evidence type="ECO:0000269" key="9">
    <source>
    </source>
</evidence>
<evidence type="ECO:0000269" key="10">
    <source ref="8"/>
</evidence>
<evidence type="ECO:0000303" key="11">
    <source>
    </source>
</evidence>
<evidence type="ECO:0000303" key="12">
    <source ref="3"/>
</evidence>
<evidence type="ECO:0000305" key="13"/>
<evidence type="ECO:0007744" key="14">
    <source>
        <dbReference type="PDB" id="4OO9"/>
    </source>
</evidence>
<evidence type="ECO:0007829" key="15">
    <source>
        <dbReference type="PDB" id="3LMK"/>
    </source>
</evidence>
<evidence type="ECO:0007829" key="16">
    <source>
        <dbReference type="PDB" id="4OO9"/>
    </source>
</evidence>
<evidence type="ECO:0007829" key="17">
    <source>
        <dbReference type="PDB" id="8T7H"/>
    </source>
</evidence>
<evidence type="ECO:0007829" key="18">
    <source>
        <dbReference type="PDB" id="8T8M"/>
    </source>
</evidence>
<evidence type="ECO:0007829" key="19">
    <source>
        <dbReference type="PDB" id="8TAO"/>
    </source>
</evidence>
<evidence type="ECO:0007829" key="20">
    <source>
        <dbReference type="PDB" id="8X0G"/>
    </source>
</evidence>
<comment type="function">
    <text evidence="7 9">G-protein coupled receptor for glutamate. Ligand binding causes a conformation change that triggers signaling via guanine nucleotide-binding proteins (G proteins) and modulates the activity of down-stream effectors. Signaling activates a phosphatidylinositol-calcium second messenger system and generates a calcium-activated chloride current. Plays an important role in the regulation of synaptic plasticity and the modulation of the neural network activity.</text>
</comment>
<comment type="subunit">
    <text evidence="1 6 8">The PPXXF motif binds HOMER1, HOMER2 and HOMER3. Interacts with SIAH1, RYR1, RYR2, ITPR1, SHANK1, SHANK3 and TAMALIN. Interacts with NCDN (By similarity). Isoform 2 interacts with NECAB2 (PubMed:19694902). Interacts with CAMK2A (PubMed:28130356).</text>
</comment>
<comment type="interaction">
    <interactant intactId="EBI-6595175">
        <id>P41594</id>
    </interactant>
    <interactant intactId="EBI-6595175">
        <id>P41594</id>
        <label>GRM5</label>
    </interactant>
    <organismsDiffer>false</organismsDiffer>
    <experiments>3</experiments>
</comment>
<comment type="interaction">
    <interactant intactId="EBI-14039683">
        <id>P41594-1</id>
    </interactant>
    <interactant intactId="EBI-950070">
        <id>Q7Z6G3</id>
        <label>NECAB2</label>
    </interactant>
    <organismsDiffer>false</organismsDiffer>
    <experiments>2</experiments>
</comment>
<comment type="subcellular location">
    <subcellularLocation>
        <location evidence="7 9">Cell membrane</location>
        <topology evidence="7 9">Multi-pass membrane protein</topology>
    </subcellularLocation>
</comment>
<comment type="alternative products">
    <event type="alternative splicing"/>
    <isoform>
        <id>P41594-1</id>
        <name>2</name>
        <name>5b</name>
        <sequence type="displayed"/>
    </isoform>
    <isoform>
        <id>P41594-2</id>
        <name>1</name>
        <name>5a</name>
        <sequence type="described" ref="VSP_002030"/>
    </isoform>
    <isoform>
        <id>P41594-3</id>
        <name>3</name>
        <name>5d</name>
        <sequence type="described" ref="VSP_047710"/>
    </isoform>
</comment>
<comment type="similarity">
    <text evidence="13">Belongs to the G-protein coupled receptor 3 family.</text>
</comment>
<reference key="1">
    <citation type="journal article" date="1994" name="Biochem. Biophys. Res. Commun.">
        <title>Molecular cloning and the functional expression of two isoforms of human metabotropic glutamate receptor subtype 5.</title>
        <authorList>
            <person name="Minakami R."/>
            <person name="Katsuki F."/>
            <person name="Yamamoto T."/>
            <person name="Nakamura K."/>
            <person name="Sugiyama H."/>
        </authorList>
    </citation>
    <scope>NUCLEOTIDE SEQUENCE [MRNA] (ISOFORMS 1 AND 2)</scope>
    <scope>FUNCTION</scope>
    <scope>SUBCELLULAR LOCATION</scope>
    <source>
        <tissue>Brain</tissue>
    </source>
</reference>
<reference key="2">
    <citation type="submission" date="1996-07" db="EMBL/GenBank/DDBJ databases">
        <authorList>
            <person name="Katsuki F."/>
        </authorList>
    </citation>
    <scope>SEQUENCE REVISION</scope>
</reference>
<reference key="3">
    <citation type="journal article" date="1999" name="Abstr. - Soc. Neurosci.">
        <title>Molecular cloning and characterization of human metabotropic glutamate receptor 5d; a splice variant with reduced desensitization properties.</title>
        <authorList>
            <person name="Levinthal C."/>
            <person name="Storjohann L."/>
            <person name="Hammerland L.G."/>
            <person name="Hung B.C.P."/>
            <person name="Krapcho K.J."/>
            <person name="Logan M.A."/>
            <person name="Smith D.L."/>
            <person name="Trovato R."/>
            <person name="Vanwagenen B.C."/>
            <person name="Stormannn T.M."/>
        </authorList>
    </citation>
    <scope>NUCLEOTIDE SEQUENCE [MRNA] (ISOFORM 3)</scope>
</reference>
<reference key="4">
    <citation type="journal article" date="2006" name="Nature">
        <title>Human chromosome 11 DNA sequence and analysis including novel gene identification.</title>
        <authorList>
            <person name="Taylor T.D."/>
            <person name="Noguchi H."/>
            <person name="Totoki Y."/>
            <person name="Toyoda A."/>
            <person name="Kuroki Y."/>
            <person name="Dewar K."/>
            <person name="Lloyd C."/>
            <person name="Itoh T."/>
            <person name="Takeda T."/>
            <person name="Kim D.-W."/>
            <person name="She X."/>
            <person name="Barlow K.F."/>
            <person name="Bloom T."/>
            <person name="Bruford E."/>
            <person name="Chang J.L."/>
            <person name="Cuomo C.A."/>
            <person name="Eichler E."/>
            <person name="FitzGerald M.G."/>
            <person name="Jaffe D.B."/>
            <person name="LaButti K."/>
            <person name="Nicol R."/>
            <person name="Park H.-S."/>
            <person name="Seaman C."/>
            <person name="Sougnez C."/>
            <person name="Yang X."/>
            <person name="Zimmer A.R."/>
            <person name="Zody M.C."/>
            <person name="Birren B.W."/>
            <person name="Nusbaum C."/>
            <person name="Fujiyama A."/>
            <person name="Hattori M."/>
            <person name="Rogers J."/>
            <person name="Lander E.S."/>
            <person name="Sakaki Y."/>
        </authorList>
    </citation>
    <scope>NUCLEOTIDE SEQUENCE [LARGE SCALE GENOMIC DNA]</scope>
</reference>
<reference key="5">
    <citation type="journal article" date="1993" name="Biochem. Biophys. Res. Commun.">
        <title>A variant of metabotropic glutamate receptor subtype 5: an evolutionally conserved insertion with no termination codon.</title>
        <authorList>
            <person name="Minakami R."/>
            <person name="Katsuki F."/>
            <person name="Sugiyama H."/>
        </authorList>
    </citation>
    <scope>NUCLEOTIDE SEQUENCE [MRNA] OF 860-952 (ISOFORM 2)</scope>
    <source>
        <tissue>Brain</tissue>
    </source>
</reference>
<reference key="6">
    <citation type="journal article" date="2009" name="J. Neurochem.">
        <title>The association of metabotropic glutamate receptor type 5 with the neuronal Ca2+-binding protein 2 modulates receptor function.</title>
        <authorList>
            <person name="Canela L."/>
            <person name="Fernandez-Duenas V."/>
            <person name="Albergaria C."/>
            <person name="Watanabe M."/>
            <person name="Lluis C."/>
            <person name="Mallol J."/>
            <person name="Canela E.I."/>
            <person name="Franco R."/>
            <person name="Lujan R."/>
            <person name="Ciruela F."/>
        </authorList>
    </citation>
    <scope>INTERACTION WITH NECAB2</scope>
</reference>
<reference key="7">
    <citation type="journal article" date="2017" name="J. Neurosci.">
        <title>Mutation Disrupts Dendritic Morphology and Synaptic Transmission, and Causes ASD-Related Behaviors.</title>
        <authorList>
            <person name="Stephenson J.R."/>
            <person name="Wang X."/>
            <person name="Perfitt T.L."/>
            <person name="Parrish W.P."/>
            <person name="Shonesy B.C."/>
            <person name="Marks C.R."/>
            <person name="Mortlock D.P."/>
            <person name="Nakagawa T."/>
            <person name="Sutcliffe J.S."/>
            <person name="Colbran R.J."/>
        </authorList>
    </citation>
    <scope>INTERACTION WITH CAMK2A</scope>
</reference>
<reference key="8">
    <citation type="submission" date="2011-07" db="PDB data bank">
        <title>Metabotropic glutamate receptor MGluR5 complexed with glutamate.</title>
        <authorList>
            <consortium name="Structural genomics consortium (SGC)"/>
        </authorList>
    </citation>
    <scope>X-RAY CRYSTALLOGRAPHY (2.44 ANGSTROMS) OF 18-505 IN COMPLEX WITH GLUTAMATE</scope>
    <scope>GLYCOSYLATION AT ASN-445</scope>
    <scope>DISULFIDE BONDS</scope>
</reference>
<reference evidence="14" key="9">
    <citation type="journal article" date="2014" name="Nature">
        <title>Structure of class C GPCR metabotropic glutamate receptor 5 transmembrane domain.</title>
        <authorList>
            <person name="Dore A.S."/>
            <person name="Okrasa K."/>
            <person name="Patel J.C."/>
            <person name="Serrano-Vega M."/>
            <person name="Bennett K."/>
            <person name="Cooke R.M."/>
            <person name="Errey J.C."/>
            <person name="Jazayeri A."/>
            <person name="Khan S."/>
            <person name="Tehan B."/>
            <person name="Weir M."/>
            <person name="Wiggin G.R."/>
            <person name="Marshall F.H."/>
        </authorList>
    </citation>
    <scope>X-RAY CRYSTALLOGRAPHY (2.60 ANGSTROMS) OF 569-836 IN COMPLEX WITH ALLOSTERIC EFFECTOR MAVOGLURANT</scope>
    <scope>FUNCTION</scope>
    <scope>SUBCELLULAR LOCATION</scope>
    <scope>TOPOLOGY</scope>
    <scope>DISULFIDE BONDS</scope>
    <scope>MUTAGENESIS OF SER-613; SER-614; LYS-665 AND GLU-770</scope>
</reference>
<dbReference type="EMBL" id="D28538">
    <property type="protein sequence ID" value="BAA05891.1"/>
    <property type="molecule type" value="mRNA"/>
</dbReference>
<dbReference type="EMBL" id="D28539">
    <property type="protein sequence ID" value="BAA05892.1"/>
    <property type="molecule type" value="mRNA"/>
</dbReference>
<dbReference type="EMBL" id="AY608336">
    <property type="protein sequence ID" value="AAT37960.1"/>
    <property type="molecule type" value="mRNA"/>
</dbReference>
<dbReference type="EMBL" id="AP000626">
    <property type="status" value="NOT_ANNOTATED_CDS"/>
    <property type="molecule type" value="Genomic_DNA"/>
</dbReference>
<dbReference type="EMBL" id="AP001482">
    <property type="status" value="NOT_ANNOTATED_CDS"/>
    <property type="molecule type" value="Genomic_DNA"/>
</dbReference>
<dbReference type="EMBL" id="AP001828">
    <property type="status" value="NOT_ANNOTATED_CDS"/>
    <property type="molecule type" value="Genomic_DNA"/>
</dbReference>
<dbReference type="EMBL" id="AP003120">
    <property type="status" value="NOT_ANNOTATED_CDS"/>
    <property type="molecule type" value="Genomic_DNA"/>
</dbReference>
<dbReference type="EMBL" id="AP006214">
    <property type="status" value="NOT_ANNOTATED_CDS"/>
    <property type="molecule type" value="Genomic_DNA"/>
</dbReference>
<dbReference type="EMBL" id="AP006215">
    <property type="status" value="NOT_ANNOTATED_CDS"/>
    <property type="molecule type" value="Genomic_DNA"/>
</dbReference>
<dbReference type="EMBL" id="S64316">
    <property type="protein sequence ID" value="AAD13954.1"/>
    <property type="molecule type" value="mRNA"/>
</dbReference>
<dbReference type="CCDS" id="CCDS44694.1">
    <molecule id="P41594-1"/>
</dbReference>
<dbReference type="CCDS" id="CCDS8283.1">
    <molecule id="P41594-2"/>
</dbReference>
<dbReference type="PIR" id="JC2131">
    <property type="entry name" value="JC2131"/>
</dbReference>
<dbReference type="PIR" id="JC2132">
    <property type="entry name" value="JC2132"/>
</dbReference>
<dbReference type="RefSeq" id="NP_000833.1">
    <molecule id="P41594-2"/>
    <property type="nucleotide sequence ID" value="NM_000842.5"/>
</dbReference>
<dbReference type="RefSeq" id="NP_001137303.1">
    <molecule id="P41594-1"/>
    <property type="nucleotide sequence ID" value="NM_001143831.3"/>
</dbReference>
<dbReference type="RefSeq" id="NP_001371197.1">
    <molecule id="P41594-2"/>
    <property type="nucleotide sequence ID" value="NM_001384268.1"/>
</dbReference>
<dbReference type="RefSeq" id="XP_006718891.1">
    <property type="nucleotide sequence ID" value="XM_006718828.3"/>
</dbReference>
<dbReference type="RefSeq" id="XP_011541094.1">
    <molecule id="P41594-1"/>
    <property type="nucleotide sequence ID" value="XM_011542792.2"/>
</dbReference>
<dbReference type="RefSeq" id="XP_016873116.1">
    <property type="nucleotide sequence ID" value="XM_017017627.1"/>
</dbReference>
<dbReference type="RefSeq" id="XP_054224560.1">
    <molecule id="P41594-1"/>
    <property type="nucleotide sequence ID" value="XM_054368585.1"/>
</dbReference>
<dbReference type="PDB" id="3LMK">
    <property type="method" value="X-ray"/>
    <property type="resolution" value="2.44 A"/>
    <property type="chains" value="A/B=18-505"/>
</dbReference>
<dbReference type="PDB" id="4OO9">
    <property type="method" value="X-ray"/>
    <property type="resolution" value="2.60 A"/>
    <property type="chains" value="A=569-836"/>
</dbReference>
<dbReference type="PDB" id="5CGC">
    <property type="method" value="X-ray"/>
    <property type="resolution" value="3.10 A"/>
    <property type="chains" value="A=569-836"/>
</dbReference>
<dbReference type="PDB" id="5CGD">
    <property type="method" value="X-ray"/>
    <property type="resolution" value="2.60 A"/>
    <property type="chains" value="A=569-836"/>
</dbReference>
<dbReference type="PDB" id="6N4X">
    <property type="method" value="X-ray"/>
    <property type="resolution" value="4.00 A"/>
    <property type="chains" value="A/B=20-865"/>
</dbReference>
<dbReference type="PDB" id="6N4Y">
    <property type="method" value="X-ray"/>
    <property type="resolution" value="3.26 A"/>
    <property type="chains" value="A/B/C/D=21-571"/>
</dbReference>
<dbReference type="PDB" id="6N50">
    <property type="method" value="X-ray"/>
    <property type="resolution" value="3.75 A"/>
    <property type="chains" value="A/B/C=21-571"/>
</dbReference>
<dbReference type="PDB" id="6N51">
    <property type="method" value="EM"/>
    <property type="resolution" value="4.00 A"/>
    <property type="chains" value="A/B=23-826"/>
</dbReference>
<dbReference type="PDB" id="6N52">
    <property type="method" value="EM"/>
    <property type="resolution" value="4.00 A"/>
    <property type="chains" value="A/B=20-839"/>
</dbReference>
<dbReference type="PDB" id="7FD8">
    <property type="method" value="EM"/>
    <property type="resolution" value="3.80 A"/>
    <property type="chains" value="A/B=21-856"/>
</dbReference>
<dbReference type="PDB" id="7FD9">
    <property type="method" value="EM"/>
    <property type="resolution" value="4.00 A"/>
    <property type="chains" value="A/B=21-856"/>
</dbReference>
<dbReference type="PDB" id="8T6J">
    <property type="method" value="EM"/>
    <property type="resolution" value="3.50 A"/>
    <property type="chains" value="A/B=20-876"/>
</dbReference>
<dbReference type="PDB" id="8T7H">
    <property type="method" value="EM"/>
    <property type="resolution" value="3.30 A"/>
    <property type="chains" value="A/B=20-876"/>
</dbReference>
<dbReference type="PDB" id="8T8M">
    <property type="method" value="EM"/>
    <property type="resolution" value="3.00 A"/>
    <property type="chains" value="A/B=20-876"/>
</dbReference>
<dbReference type="PDB" id="8TAO">
    <property type="method" value="EM"/>
    <property type="resolution" value="2.90 A"/>
    <property type="chains" value="A/B=20-876"/>
</dbReference>
<dbReference type="PDB" id="8X0B">
    <property type="method" value="EM"/>
    <property type="resolution" value="3.10 A"/>
    <property type="chains" value="A/B=21-856"/>
</dbReference>
<dbReference type="PDB" id="8X0C">
    <property type="method" value="EM"/>
    <property type="resolution" value="3.20 A"/>
    <property type="chains" value="A/B=21-856"/>
</dbReference>
<dbReference type="PDB" id="8X0D">
    <property type="method" value="EM"/>
    <property type="resolution" value="3.50 A"/>
    <property type="chains" value="A/B=21-856"/>
</dbReference>
<dbReference type="PDB" id="8X0E">
    <property type="method" value="EM"/>
    <property type="resolution" value="3.40 A"/>
    <property type="chains" value="A/B=21-856"/>
</dbReference>
<dbReference type="PDB" id="8X0F">
    <property type="method" value="EM"/>
    <property type="resolution" value="3.30 A"/>
    <property type="chains" value="A/B=21-856"/>
</dbReference>
<dbReference type="PDB" id="8X0G">
    <property type="method" value="EM"/>
    <property type="resolution" value="3.00 A"/>
    <property type="chains" value="A/B=21-856"/>
</dbReference>
<dbReference type="PDB" id="8X0H">
    <property type="method" value="EM"/>
    <property type="resolution" value="4.10 A"/>
    <property type="chains" value="A/B=21-856"/>
</dbReference>
<dbReference type="PDBsum" id="3LMK"/>
<dbReference type="PDBsum" id="4OO9"/>
<dbReference type="PDBsum" id="5CGC"/>
<dbReference type="PDBsum" id="5CGD"/>
<dbReference type="PDBsum" id="6N4X"/>
<dbReference type="PDBsum" id="6N4Y"/>
<dbReference type="PDBsum" id="6N50"/>
<dbReference type="PDBsum" id="6N51"/>
<dbReference type="PDBsum" id="6N52"/>
<dbReference type="PDBsum" id="7FD8"/>
<dbReference type="PDBsum" id="7FD9"/>
<dbReference type="PDBsum" id="8T6J"/>
<dbReference type="PDBsum" id="8T7H"/>
<dbReference type="PDBsum" id="8T8M"/>
<dbReference type="PDBsum" id="8TAO"/>
<dbReference type="PDBsum" id="8X0B"/>
<dbReference type="PDBsum" id="8X0C"/>
<dbReference type="PDBsum" id="8X0D"/>
<dbReference type="PDBsum" id="8X0E"/>
<dbReference type="PDBsum" id="8X0F"/>
<dbReference type="PDBsum" id="8X0G"/>
<dbReference type="PDBsum" id="8X0H"/>
<dbReference type="EMDB" id="EMD-0345"/>
<dbReference type="EMDB" id="EMD-0346"/>
<dbReference type="EMDB" id="EMD-0347"/>
<dbReference type="EMDB" id="EMD-31536"/>
<dbReference type="EMDB" id="EMD-31537"/>
<dbReference type="EMDB" id="EMD-37973"/>
<dbReference type="EMDB" id="EMD-37974"/>
<dbReference type="EMDB" id="EMD-37975"/>
<dbReference type="EMDB" id="EMD-37976"/>
<dbReference type="EMDB" id="EMD-37977"/>
<dbReference type="EMDB" id="EMD-37978"/>
<dbReference type="EMDB" id="EMD-37979"/>
<dbReference type="EMDB" id="EMD-41069"/>
<dbReference type="EMDB" id="EMD-41092"/>
<dbReference type="EMDB" id="EMD-41099"/>
<dbReference type="EMDB" id="EMD-41139"/>
<dbReference type="SMR" id="P41594"/>
<dbReference type="BioGRID" id="109172">
    <property type="interactions" value="21"/>
</dbReference>
<dbReference type="CORUM" id="P41594"/>
<dbReference type="FunCoup" id="P41594">
    <property type="interactions" value="1051"/>
</dbReference>
<dbReference type="IntAct" id="P41594">
    <property type="interactions" value="5"/>
</dbReference>
<dbReference type="STRING" id="9606.ENSP00000306138"/>
<dbReference type="BindingDB" id="P41594"/>
<dbReference type="ChEMBL" id="CHEMBL3227"/>
<dbReference type="DrugBank" id="DB04256">
    <property type="generic name" value="(S)-alpha-methyl-4-carboxyphenylglycine"/>
</dbReference>
<dbReference type="DrugBank" id="DB00659">
    <property type="generic name" value="Acamprosate"/>
</dbReference>
<dbReference type="DrugBank" id="DB05070">
    <property type="generic name" value="ADX10059"/>
</dbReference>
<dbReference type="DrugBank" id="DB12644">
    <property type="generic name" value="AZD-2066"/>
</dbReference>
<dbReference type="DrugBank" id="DB11833">
    <property type="generic name" value="Basimglurant"/>
</dbReference>
<dbReference type="DrugBank" id="DB12733">
    <property type="generic name" value="Dipraglurant"/>
</dbReference>
<dbReference type="DrugBank" id="DB12931">
    <property type="generic name" value="Fenobam"/>
</dbReference>
<dbReference type="DrugBank" id="DB13004">
    <property type="generic name" value="Mavoglurant"/>
</dbReference>
<dbReference type="DrugBank" id="DB02999">
    <property type="generic name" value="Quisqualic acid"/>
</dbReference>
<dbReference type="DrugBank" id="DB06201">
    <property type="generic name" value="Rufinamide"/>
</dbReference>
<dbReference type="DrugBank" id="DB16943">
    <property type="generic name" value="STX-107"/>
</dbReference>
<dbReference type="DrugCentral" id="P41594"/>
<dbReference type="GuidetoPHARMACOLOGY" id="293"/>
<dbReference type="TCDB" id="9.A.14.7.8">
    <property type="family name" value="the g-protein-coupled receptor (gpcr) family"/>
</dbReference>
<dbReference type="GlyCosmos" id="P41594">
    <property type="glycosylation" value="8 sites, 1 glycan"/>
</dbReference>
<dbReference type="GlyGen" id="P41594">
    <property type="glycosylation" value="9 sites, 1 O-linked glycan (3 sites)"/>
</dbReference>
<dbReference type="iPTMnet" id="P41594"/>
<dbReference type="PhosphoSitePlus" id="P41594"/>
<dbReference type="SwissPalm" id="P41594"/>
<dbReference type="BioMuta" id="GRM5"/>
<dbReference type="DMDM" id="1709020"/>
<dbReference type="jPOST" id="P41594"/>
<dbReference type="MassIVE" id="P41594"/>
<dbReference type="PaxDb" id="9606-ENSP00000306138"/>
<dbReference type="PeptideAtlas" id="P41594"/>
<dbReference type="ProteomicsDB" id="55471">
    <molecule id="P41594-1"/>
</dbReference>
<dbReference type="ProteomicsDB" id="55472">
    <molecule id="P41594-2"/>
</dbReference>
<dbReference type="ProteomicsDB" id="66504"/>
<dbReference type="ABCD" id="P41594">
    <property type="antibodies" value="5 sequenced antibodies"/>
</dbReference>
<dbReference type="Antibodypedia" id="2950">
    <property type="antibodies" value="549 antibodies from 44 providers"/>
</dbReference>
<dbReference type="DNASU" id="2915"/>
<dbReference type="Ensembl" id="ENST00000305432.9">
    <molecule id="P41594-2"/>
    <property type="protein sequence ID" value="ENSP00000305905.5"/>
    <property type="gene ID" value="ENSG00000168959.15"/>
</dbReference>
<dbReference type="Ensembl" id="ENST00000305447.5">
    <molecule id="P41594-1"/>
    <property type="protein sequence ID" value="ENSP00000306138.4"/>
    <property type="gene ID" value="ENSG00000168959.15"/>
</dbReference>
<dbReference type="Ensembl" id="ENST00000455756.6">
    <molecule id="P41594-2"/>
    <property type="protein sequence ID" value="ENSP00000405690.2"/>
    <property type="gene ID" value="ENSG00000168959.15"/>
</dbReference>
<dbReference type="GeneID" id="2915"/>
<dbReference type="KEGG" id="hsa:2915"/>
<dbReference type="MANE-Select" id="ENST00000305447.5">
    <property type="protein sequence ID" value="ENSP00000306138.4"/>
    <property type="RefSeq nucleotide sequence ID" value="NM_001143831.3"/>
    <property type="RefSeq protein sequence ID" value="NP_001137303.1"/>
</dbReference>
<dbReference type="UCSC" id="uc001pcq.4">
    <molecule id="P41594-1"/>
    <property type="organism name" value="human"/>
</dbReference>
<dbReference type="AGR" id="HGNC:4597"/>
<dbReference type="CTD" id="2915"/>
<dbReference type="DisGeNET" id="2915"/>
<dbReference type="GeneCards" id="GRM5"/>
<dbReference type="HGNC" id="HGNC:4597">
    <property type="gene designation" value="GRM5"/>
</dbReference>
<dbReference type="HPA" id="ENSG00000168959">
    <property type="expression patterns" value="Tissue enriched (brain)"/>
</dbReference>
<dbReference type="MalaCards" id="GRM5"/>
<dbReference type="MIM" id="604102">
    <property type="type" value="gene"/>
</dbReference>
<dbReference type="neXtProt" id="NX_P41594"/>
<dbReference type="OpenTargets" id="ENSG00000168959"/>
<dbReference type="PharmGKB" id="PA28994"/>
<dbReference type="VEuPathDB" id="HostDB:ENSG00000168959"/>
<dbReference type="eggNOG" id="KOG1056">
    <property type="taxonomic scope" value="Eukaryota"/>
</dbReference>
<dbReference type="GeneTree" id="ENSGT01030000234595"/>
<dbReference type="HOGENOM" id="CLU_005389_0_1_1"/>
<dbReference type="InParanoid" id="P41594"/>
<dbReference type="OMA" id="NGDSPGX"/>
<dbReference type="OrthoDB" id="425344at2759"/>
<dbReference type="PAN-GO" id="P41594">
    <property type="GO annotations" value="8 GO annotations based on evolutionary models"/>
</dbReference>
<dbReference type="PhylomeDB" id="P41594"/>
<dbReference type="TreeFam" id="TF313240"/>
<dbReference type="PathwayCommons" id="P41594"/>
<dbReference type="Reactome" id="R-HSA-416476">
    <property type="pathway name" value="G alpha (q) signalling events"/>
</dbReference>
<dbReference type="Reactome" id="R-HSA-420499">
    <property type="pathway name" value="Class C/3 (Metabotropic glutamate/pheromone receptors)"/>
</dbReference>
<dbReference type="Reactome" id="R-HSA-6794361">
    <property type="pathway name" value="Neurexins and neuroligins"/>
</dbReference>
<dbReference type="SignaLink" id="P41594"/>
<dbReference type="SIGNOR" id="P41594"/>
<dbReference type="BioGRID-ORCS" id="2915">
    <property type="hits" value="16 hits in 1154 CRISPR screens"/>
</dbReference>
<dbReference type="CD-CODE" id="FB4E32DD">
    <property type="entry name" value="Presynaptic clusters and postsynaptic densities"/>
</dbReference>
<dbReference type="ChiTaRS" id="GRM5">
    <property type="organism name" value="human"/>
</dbReference>
<dbReference type="EvolutionaryTrace" id="P41594"/>
<dbReference type="GenomeRNAi" id="2915"/>
<dbReference type="Pharos" id="P41594">
    <property type="development level" value="Tchem"/>
</dbReference>
<dbReference type="PRO" id="PR:P41594"/>
<dbReference type="Proteomes" id="UP000005640">
    <property type="component" value="Chromosome 11"/>
</dbReference>
<dbReference type="RNAct" id="P41594">
    <property type="molecule type" value="protein"/>
</dbReference>
<dbReference type="Bgee" id="ENSG00000168959">
    <property type="expression patterns" value="Expressed in endothelial cell and 74 other cell types or tissues"/>
</dbReference>
<dbReference type="ExpressionAtlas" id="P41594">
    <property type="expression patterns" value="baseline and differential"/>
</dbReference>
<dbReference type="GO" id="GO:0097449">
    <property type="term" value="C:astrocyte projection"/>
    <property type="evidence" value="ECO:0007669"/>
    <property type="project" value="Ensembl"/>
</dbReference>
<dbReference type="GO" id="GO:0005737">
    <property type="term" value="C:cytoplasm"/>
    <property type="evidence" value="ECO:0007669"/>
    <property type="project" value="Ensembl"/>
</dbReference>
<dbReference type="GO" id="GO:0030425">
    <property type="term" value="C:dendrite"/>
    <property type="evidence" value="ECO:0000314"/>
    <property type="project" value="ARUK-UCL"/>
</dbReference>
<dbReference type="GO" id="GO:0043198">
    <property type="term" value="C:dendritic shaft"/>
    <property type="evidence" value="ECO:0007669"/>
    <property type="project" value="Ensembl"/>
</dbReference>
<dbReference type="GO" id="GO:0043197">
    <property type="term" value="C:dendritic spine"/>
    <property type="evidence" value="ECO:0007669"/>
    <property type="project" value="Ensembl"/>
</dbReference>
<dbReference type="GO" id="GO:0098978">
    <property type="term" value="C:glutamatergic synapse"/>
    <property type="evidence" value="ECO:0007669"/>
    <property type="project" value="Ensembl"/>
</dbReference>
<dbReference type="GO" id="GO:0043025">
    <property type="term" value="C:neuronal cell body"/>
    <property type="evidence" value="ECO:0007669"/>
    <property type="project" value="Ensembl"/>
</dbReference>
<dbReference type="GO" id="GO:0005886">
    <property type="term" value="C:plasma membrane"/>
    <property type="evidence" value="ECO:0000315"/>
    <property type="project" value="UniProtKB"/>
</dbReference>
<dbReference type="GO" id="GO:0098839">
    <property type="term" value="C:postsynaptic density membrane"/>
    <property type="evidence" value="ECO:0000318"/>
    <property type="project" value="GO_Central"/>
</dbReference>
<dbReference type="GO" id="GO:0098685">
    <property type="term" value="C:Schaffer collateral - CA1 synapse"/>
    <property type="evidence" value="ECO:0007669"/>
    <property type="project" value="Ensembl"/>
</dbReference>
<dbReference type="GO" id="GO:0031687">
    <property type="term" value="F:A2A adenosine receptor binding"/>
    <property type="evidence" value="ECO:0007669"/>
    <property type="project" value="Ensembl"/>
</dbReference>
<dbReference type="GO" id="GO:0001640">
    <property type="term" value="F:adenylate cyclase inhibiting G protein-coupled glutamate receptor activity"/>
    <property type="evidence" value="ECO:0000318"/>
    <property type="project" value="GO_Central"/>
</dbReference>
<dbReference type="GO" id="GO:0004930">
    <property type="term" value="F:G protein-coupled receptor activity"/>
    <property type="evidence" value="ECO:0000315"/>
    <property type="project" value="UniProtKB"/>
</dbReference>
<dbReference type="GO" id="GO:0099530">
    <property type="term" value="F:G protein-coupled receptor activity involved in regulation of postsynaptic membrane potential"/>
    <property type="evidence" value="ECO:0000318"/>
    <property type="project" value="GO_Central"/>
</dbReference>
<dbReference type="GO" id="GO:0008066">
    <property type="term" value="F:glutamate receptor activity"/>
    <property type="evidence" value="ECO:0000314"/>
    <property type="project" value="UniProtKB"/>
</dbReference>
<dbReference type="GO" id="GO:0042802">
    <property type="term" value="F:identical protein binding"/>
    <property type="evidence" value="ECO:0000353"/>
    <property type="project" value="IntAct"/>
</dbReference>
<dbReference type="GO" id="GO:0099583">
    <property type="term" value="F:neurotransmitter receptor activity involved in regulation of postsynaptic cytosolic calcium ion concentration"/>
    <property type="evidence" value="ECO:0000318"/>
    <property type="project" value="GO_Central"/>
</dbReference>
<dbReference type="GO" id="GO:0030296">
    <property type="term" value="F:protein tyrosine kinase activator activity"/>
    <property type="evidence" value="ECO:0000314"/>
    <property type="project" value="ARUK-UCL"/>
</dbReference>
<dbReference type="GO" id="GO:1990782">
    <property type="term" value="F:protein tyrosine kinase binding"/>
    <property type="evidence" value="ECO:0000250"/>
    <property type="project" value="ARUK-UCL"/>
</dbReference>
<dbReference type="GO" id="GO:1904646">
    <property type="term" value="P:cellular response to amyloid-beta"/>
    <property type="evidence" value="ECO:0000316"/>
    <property type="project" value="ARUK-UCL"/>
</dbReference>
<dbReference type="GO" id="GO:0007268">
    <property type="term" value="P:chemical synaptic transmission"/>
    <property type="evidence" value="ECO:0000304"/>
    <property type="project" value="ProtInc"/>
</dbReference>
<dbReference type="GO" id="GO:0050890">
    <property type="term" value="P:cognition"/>
    <property type="evidence" value="ECO:0000315"/>
    <property type="project" value="UniProtKB"/>
</dbReference>
<dbReference type="GO" id="GO:0002029">
    <property type="term" value="P:desensitization of G protein-coupled receptor signaling pathway"/>
    <property type="evidence" value="ECO:0007669"/>
    <property type="project" value="Ensembl"/>
</dbReference>
<dbReference type="GO" id="GO:0007216">
    <property type="term" value="P:G protein-coupled glutamate receptor signaling pathway"/>
    <property type="evidence" value="ECO:0000315"/>
    <property type="project" value="UniProtKB"/>
</dbReference>
<dbReference type="GO" id="GO:0007612">
    <property type="term" value="P:learning"/>
    <property type="evidence" value="ECO:0007669"/>
    <property type="project" value="Ensembl"/>
</dbReference>
<dbReference type="GO" id="GO:0007611">
    <property type="term" value="P:learning or memory"/>
    <property type="evidence" value="ECO:0000250"/>
    <property type="project" value="ARUK-UCL"/>
</dbReference>
<dbReference type="GO" id="GO:0007626">
    <property type="term" value="P:locomotory behavior"/>
    <property type="evidence" value="ECO:0007669"/>
    <property type="project" value="Ensembl"/>
</dbReference>
<dbReference type="GO" id="GO:0007206">
    <property type="term" value="P:phospholipase C-activating G protein-coupled glutamate receptor signaling pathway"/>
    <property type="evidence" value="ECO:0000314"/>
    <property type="project" value="ARUK-UCL"/>
</dbReference>
<dbReference type="GO" id="GO:0050850">
    <property type="term" value="P:positive regulation of calcium-mediated signaling"/>
    <property type="evidence" value="ECO:0000316"/>
    <property type="project" value="ARUK-UCL"/>
</dbReference>
<dbReference type="GO" id="GO:0048170">
    <property type="term" value="P:positive regulation of long-term neuronal synaptic plasticity"/>
    <property type="evidence" value="ECO:0007669"/>
    <property type="project" value="Ensembl"/>
</dbReference>
<dbReference type="GO" id="GO:0043410">
    <property type="term" value="P:positive regulation of MAPK cascade"/>
    <property type="evidence" value="ECO:0007669"/>
    <property type="project" value="Ensembl"/>
</dbReference>
<dbReference type="GO" id="GO:0006355">
    <property type="term" value="P:regulation of DNA-templated transcription"/>
    <property type="evidence" value="ECO:0007669"/>
    <property type="project" value="Ensembl"/>
</dbReference>
<dbReference type="GO" id="GO:0051966">
    <property type="term" value="P:regulation of synaptic transmission, glutamatergic"/>
    <property type="evidence" value="ECO:0000318"/>
    <property type="project" value="GO_Central"/>
</dbReference>
<dbReference type="GO" id="GO:0050808">
    <property type="term" value="P:synapse organization"/>
    <property type="evidence" value="ECO:0000250"/>
    <property type="project" value="ARUK-UCL"/>
</dbReference>
<dbReference type="CDD" id="cd15450">
    <property type="entry name" value="7tmC_mGluR5"/>
    <property type="match status" value="1"/>
</dbReference>
<dbReference type="CDD" id="cd06374">
    <property type="entry name" value="PBP1_mGluR_groupI"/>
    <property type="match status" value="1"/>
</dbReference>
<dbReference type="FunFam" id="3.40.50.2300:FF:000219">
    <property type="entry name" value="Glutamate metabotropic receptor 5"/>
    <property type="match status" value="1"/>
</dbReference>
<dbReference type="FunFam" id="2.10.50.30:FF:000001">
    <property type="entry name" value="metabotropic glutamate receptor 1"/>
    <property type="match status" value="1"/>
</dbReference>
<dbReference type="FunFam" id="3.40.50.2300:FF:000243">
    <property type="entry name" value="Metabotropic glutamate receptor 5"/>
    <property type="match status" value="1"/>
</dbReference>
<dbReference type="Gene3D" id="3.40.50.2300">
    <property type="match status" value="2"/>
</dbReference>
<dbReference type="Gene3D" id="2.10.50.30">
    <property type="entry name" value="GPCR, family 3, nine cysteines domain"/>
    <property type="match status" value="1"/>
</dbReference>
<dbReference type="InterPro" id="IPR001828">
    <property type="entry name" value="ANF_lig-bd_rcpt"/>
</dbReference>
<dbReference type="InterPro" id="IPR000337">
    <property type="entry name" value="GPCR_3"/>
</dbReference>
<dbReference type="InterPro" id="IPR011500">
    <property type="entry name" value="GPCR_3_9-Cys_dom"/>
</dbReference>
<dbReference type="InterPro" id="IPR038550">
    <property type="entry name" value="GPCR_3_9-Cys_sf"/>
</dbReference>
<dbReference type="InterPro" id="IPR017978">
    <property type="entry name" value="GPCR_3_C"/>
</dbReference>
<dbReference type="InterPro" id="IPR017979">
    <property type="entry name" value="GPCR_3_CS"/>
</dbReference>
<dbReference type="InterPro" id="IPR000202">
    <property type="entry name" value="GPCR_3_mGluR5"/>
</dbReference>
<dbReference type="InterPro" id="IPR000162">
    <property type="entry name" value="GPCR_3_mtglu_rcpt"/>
</dbReference>
<dbReference type="InterPro" id="IPR019588">
    <property type="entry name" value="Metabotropic_Glu_rcpt_Homer-bd"/>
</dbReference>
<dbReference type="InterPro" id="IPR050726">
    <property type="entry name" value="mGluR"/>
</dbReference>
<dbReference type="InterPro" id="IPR028082">
    <property type="entry name" value="Peripla_BP_I"/>
</dbReference>
<dbReference type="PANTHER" id="PTHR24060">
    <property type="entry name" value="METABOTROPIC GLUTAMATE RECEPTOR"/>
    <property type="match status" value="1"/>
</dbReference>
<dbReference type="Pfam" id="PF00003">
    <property type="entry name" value="7tm_3"/>
    <property type="match status" value="1"/>
</dbReference>
<dbReference type="Pfam" id="PF01094">
    <property type="entry name" value="ANF_receptor"/>
    <property type="match status" value="1"/>
</dbReference>
<dbReference type="Pfam" id="PF10606">
    <property type="entry name" value="GluR_Homer-bdg"/>
    <property type="match status" value="1"/>
</dbReference>
<dbReference type="Pfam" id="PF07562">
    <property type="entry name" value="NCD3G"/>
    <property type="match status" value="1"/>
</dbReference>
<dbReference type="PRINTS" id="PR00248">
    <property type="entry name" value="GPCRMGR"/>
</dbReference>
<dbReference type="PRINTS" id="PR01055">
    <property type="entry name" value="MTABOTROPC5R"/>
</dbReference>
<dbReference type="PRINTS" id="PR00593">
    <property type="entry name" value="MTABOTROPICR"/>
</dbReference>
<dbReference type="SMART" id="SM01229">
    <property type="entry name" value="GluR_Homer-bdg"/>
    <property type="match status" value="1"/>
</dbReference>
<dbReference type="SUPFAM" id="SSF53822">
    <property type="entry name" value="Periplasmic binding protein-like I"/>
    <property type="match status" value="1"/>
</dbReference>
<dbReference type="PROSITE" id="PS00979">
    <property type="entry name" value="G_PROTEIN_RECEP_F3_1"/>
    <property type="match status" value="1"/>
</dbReference>
<dbReference type="PROSITE" id="PS00980">
    <property type="entry name" value="G_PROTEIN_RECEP_F3_2"/>
    <property type="match status" value="1"/>
</dbReference>
<dbReference type="PROSITE" id="PS00981">
    <property type="entry name" value="G_PROTEIN_RECEP_F3_3"/>
    <property type="match status" value="1"/>
</dbReference>
<dbReference type="PROSITE" id="PS50259">
    <property type="entry name" value="G_PROTEIN_RECEP_F3_4"/>
    <property type="match status" value="1"/>
</dbReference>
<sequence>MVLLLILSVLLLKEDVRGSAQSSERRVVAHMPGDIIIGALFSVHHQPTVDKVHERKCGAVREQYGIQRVEAMLHTLERINSDPTLLPNITLGCEIRDSCWHSAVALEQSIEFIRDSLISSEEEEGLVRCVDGSSSSFRSKKPIVGVIGPGSSSVAIQVQNLLQLFNIPQIAYSATSMDLSDKTLFKYFMRVVPSDAQQARAMVDIVKRYNWTYVSAVHTEGNYGESGMEAFKDMSAKEGICIAHSYKIYSNAGEQSFDKLLKKLTSHLPKARVVACFCEGMTVRGLLMAMRRLGLAGEFLLLGSDGWADRYDVTDGYQREAVGGITIKLQSPDVKWFDDYYLKLRPETNHRNPWFQEFWQHRFQCRLEGFPQENSKYNKTCNSSLTLKTHHVQDSKMGFVINAIYSMAYGLHNMQMSLCPGYAGLCDAMKPIDGRKLLESLMKTNFTGVSGDTILFDENGDSPGRYEIMNFKEMGKDYFDYINVGSWDNGELKMDDDEVWSKKSNIIRSVCSEPCEKGQIKVIRKGEVSCCWTCTPCKENEYVFDEYTCKACQLGSWPTDDLTGCDLIPVQYLRWGDPEPIAAVVFACLGLLATLFVTVVFIIYRDTPVVKSSSRELCYIILAGICLGYLCTFCLIAKPKQIYCYLQRIGIGLSPAMSYSALVTKTNRIARILAGSKKKICTKKPRFMSACAQLVIAFILICIQLGIIVALFIMEPPDIMHDYPSIREVYLICNTTNLGVVTPLGYNGLLILSCTFYAFKTRNVPANFNEAKYIAFTMYTTCIIWLAFVPIYFGSNYKIITMCFSVSLSATVALGCMFVPKVYIILAKPERNVRSAFTTSTVVRMHVGDGKSSSAASRSSSLVNLWKRRGSSGETLRYKDRRLAQHKSEIECFTPKGSMGNGGRATMSSSNGKSVTWAQNEKSSRGQHLWQRLSIHINKKENPNQTAVIKPFPKSTESRGLGAGAGAGGSAGGVGATGGAGCAGAGPGGPESPDAGPKALYDVAEAEEHFPAPARPRSPSPISTLSHRAGSASRTDDDVPSLHSEPVARSSSSQGSLMEQISSVVTRFTANISELNSMMLSTAAPSPGVGAPLCSSYLIPKEIQLPTTMTTFAEIQPLPAIEVTGGAQPAAGAQAAGDAARESPAAGPEAAAAKPDLEELVALTPPSPFRDSVDSGSTTPNSPVSESALCIPSSPKYDTLIIRDYTQSSSSL</sequence>